<comment type="function">
    <text evidence="4">Possesses ribonuclease activity in vitro.</text>
</comment>
<name>C3H18_ARATH</name>
<reference key="1">
    <citation type="journal article" date="1999" name="Nature">
        <title>Sequence and analysis of chromosome 2 of the plant Arabidopsis thaliana.</title>
        <authorList>
            <person name="Lin X."/>
            <person name="Kaul S."/>
            <person name="Rounsley S.D."/>
            <person name="Shea T.P."/>
            <person name="Benito M.-I."/>
            <person name="Town C.D."/>
            <person name="Fujii C.Y."/>
            <person name="Mason T.M."/>
            <person name="Bowman C.L."/>
            <person name="Barnstead M.E."/>
            <person name="Feldblyum T.V."/>
            <person name="Buell C.R."/>
            <person name="Ketchum K.A."/>
            <person name="Lee J.J."/>
            <person name="Ronning C.M."/>
            <person name="Koo H.L."/>
            <person name="Moffat K.S."/>
            <person name="Cronin L.A."/>
            <person name="Shen M."/>
            <person name="Pai G."/>
            <person name="Van Aken S."/>
            <person name="Umayam L."/>
            <person name="Tallon L.J."/>
            <person name="Gill J.E."/>
            <person name="Adams M.D."/>
            <person name="Carrera A.J."/>
            <person name="Creasy T.H."/>
            <person name="Goodman H.M."/>
            <person name="Somerville C.R."/>
            <person name="Copenhaver G.P."/>
            <person name="Preuss D."/>
            <person name="Nierman W.C."/>
            <person name="White O."/>
            <person name="Eisen J.A."/>
            <person name="Salzberg S.L."/>
            <person name="Fraser C.M."/>
            <person name="Venter J.C."/>
        </authorList>
    </citation>
    <scope>NUCLEOTIDE SEQUENCE [LARGE SCALE GENOMIC DNA]</scope>
    <source>
        <strain>cv. Columbia</strain>
    </source>
</reference>
<reference key="2">
    <citation type="journal article" date="2017" name="Plant J.">
        <title>Araport11: a complete reannotation of the Arabidopsis thaliana reference genome.</title>
        <authorList>
            <person name="Cheng C.Y."/>
            <person name="Krishnakumar V."/>
            <person name="Chan A.P."/>
            <person name="Thibaud-Nissen F."/>
            <person name="Schobel S."/>
            <person name="Town C.D."/>
        </authorList>
    </citation>
    <scope>GENOME REANNOTATION</scope>
    <source>
        <strain>cv. Columbia</strain>
    </source>
</reference>
<reference key="3">
    <citation type="journal article" date="2005" name="Plant Physiol.">
        <title>Analysis of the cDNAs of hypothetical genes on Arabidopsis chromosome 2 reveals numerous transcript variants.</title>
        <authorList>
            <person name="Xiao Y.-L."/>
            <person name="Smith S.R."/>
            <person name="Ishmael N."/>
            <person name="Redman J.C."/>
            <person name="Kumar N."/>
            <person name="Monaghan E.L."/>
            <person name="Ayele M."/>
            <person name="Haas B.J."/>
            <person name="Wu H.C."/>
            <person name="Town C.D."/>
        </authorList>
    </citation>
    <scope>NUCLEOTIDE SEQUENCE [LARGE SCALE MRNA] OF 1-353</scope>
    <scope>NUCLEOTIDE SEQUENCE [LARGE SCALE MRNA] OF 418-536</scope>
    <source>
        <strain>cv. Columbia</strain>
    </source>
</reference>
<reference key="4">
    <citation type="journal article" date="2008" name="BMC Genomics">
        <title>Genome-wide analysis of CCCH zinc finger family in Arabidopsis and rice.</title>
        <authorList>
            <person name="Wang D."/>
            <person name="Guo Y."/>
            <person name="Wu C."/>
            <person name="Yang G."/>
            <person name="Li Y."/>
            <person name="Zheng C."/>
        </authorList>
    </citation>
    <scope>NOMENCLATURE</scope>
</reference>
<reference key="5">
    <citation type="journal article" date="2008" name="FEBS Lett.">
        <title>Ribonuclease activity is a common property of Arabidopsis CCCH-containing zinc-finger proteins.</title>
        <authorList>
            <person name="Addepalli B."/>
            <person name="Hunt A.G."/>
        </authorList>
    </citation>
    <scope>FUNCTION</scope>
</reference>
<proteinExistence type="evidence at transcript level"/>
<keyword id="KW-0238">DNA-binding</keyword>
<keyword id="KW-0378">Hydrolase</keyword>
<keyword id="KW-0479">Metal-binding</keyword>
<keyword id="KW-0540">Nuclease</keyword>
<keyword id="KW-1185">Reference proteome</keyword>
<keyword id="KW-0694">RNA-binding</keyword>
<keyword id="KW-0862">Zinc</keyword>
<keyword id="KW-0863">Zinc-finger</keyword>
<evidence type="ECO:0000255" key="1">
    <source>
        <dbReference type="PROSITE-ProRule" id="PRU00176"/>
    </source>
</evidence>
<evidence type="ECO:0000255" key="2">
    <source>
        <dbReference type="PROSITE-ProRule" id="PRU00723"/>
    </source>
</evidence>
<evidence type="ECO:0000255" key="3">
    <source>
        <dbReference type="PROSITE-ProRule" id="PRU00975"/>
    </source>
</evidence>
<evidence type="ECO:0000269" key="4">
    <source>
    </source>
</evidence>
<evidence type="ECO:0000305" key="5"/>
<accession>Q9SJ41</accession>
<protein>
    <recommendedName>
        <fullName>Zinc finger CCCH domain-containing protein 18</fullName>
        <shortName>AtC3H18</shortName>
        <ecNumber>3.1.-.-</ecNumber>
    </recommendedName>
</protein>
<sequence length="536" mass="61349">MNFTESMNVVHARIQQLEPENAAKIFGYLLLMQENGNRDMIRLAFCPDSVMCSVINCVKYELARNSHHYHSPPSDHIPTPKFGSFTGSSPLSVSVSPPMKTGFWENSTEMDTLQNNLQFLNFEDPLTSPEFSNGFFSQERQCLPLRTSRRSPSLPEFPVKICHYFNKGFCKHGNNCRYFHGQIIPERESFAQMFNPNNNLSDEEHVVSPVSLEKLEGEIIELLKLRRGAPISIASLPMMYYEKYGRTLQAEGYLTESQRHGKAGYSLTKLLARLKNTIRLVDRPHGQHSVILAEDASKFVEYTGERNEHGAILAGSRQIYLTFPAESSFTEHDVSIYFTSYGHVEDVRIPCQQKRMYGFVTFASSETVKHILAKGNPHFICNARVLVKPYREKSRSSRYLDNYKPLHGMRYGSKFIERDIEMNTLPPRVSESSRMRKPFLSEPEQSVSKSLPTNYSYLGFSSDDFKLTSNAEQEEQAERLSYLLDYLNTEDNVMNITTNYRDNDRRTHCESLDSQVLNLPESPFSSLSGKEISTVT</sequence>
<dbReference type="EC" id="3.1.-.-"/>
<dbReference type="EMBL" id="AC007018">
    <property type="protein sequence ID" value="AAD29054.1"/>
    <property type="molecule type" value="Genomic_DNA"/>
</dbReference>
<dbReference type="EMBL" id="CP002685">
    <property type="protein sequence ID" value="AEC05899.1"/>
    <property type="molecule type" value="Genomic_DNA"/>
</dbReference>
<dbReference type="EMBL" id="CP002685">
    <property type="protein sequence ID" value="ANM61920.1"/>
    <property type="molecule type" value="Genomic_DNA"/>
</dbReference>
<dbReference type="EMBL" id="AY429380">
    <property type="status" value="NOT_ANNOTATED_CDS"/>
    <property type="molecule type" value="mRNA"/>
</dbReference>
<dbReference type="EMBL" id="AY429381">
    <property type="status" value="NOT_ANNOTATED_CDS"/>
    <property type="molecule type" value="mRNA"/>
</dbReference>
<dbReference type="PIR" id="E84465">
    <property type="entry name" value="E84465"/>
</dbReference>
<dbReference type="RefSeq" id="NP_001324109.1">
    <property type="nucleotide sequence ID" value="NM_001335272.1"/>
</dbReference>
<dbReference type="RefSeq" id="NP_178588.1">
    <property type="nucleotide sequence ID" value="NM_126543.7"/>
</dbReference>
<dbReference type="SMR" id="Q9SJ41"/>
<dbReference type="BioGRID" id="464">
    <property type="interactions" value="3"/>
</dbReference>
<dbReference type="FunCoup" id="Q9SJ41">
    <property type="interactions" value="569"/>
</dbReference>
<dbReference type="IntAct" id="Q9SJ41">
    <property type="interactions" value="3"/>
</dbReference>
<dbReference type="STRING" id="3702.Q9SJ41"/>
<dbReference type="iPTMnet" id="Q9SJ41"/>
<dbReference type="PaxDb" id="3702-AT2G05160.1"/>
<dbReference type="ProteomicsDB" id="239164"/>
<dbReference type="EnsemblPlants" id="AT2G05160.1">
    <property type="protein sequence ID" value="AT2G05160.1"/>
    <property type="gene ID" value="AT2G05160"/>
</dbReference>
<dbReference type="EnsemblPlants" id="AT2G05160.2">
    <property type="protein sequence ID" value="AT2G05160.2"/>
    <property type="gene ID" value="AT2G05160"/>
</dbReference>
<dbReference type="GeneID" id="815064"/>
<dbReference type="Gramene" id="AT2G05160.1">
    <property type="protein sequence ID" value="AT2G05160.1"/>
    <property type="gene ID" value="AT2G05160"/>
</dbReference>
<dbReference type="Gramene" id="AT2G05160.2">
    <property type="protein sequence ID" value="AT2G05160.2"/>
    <property type="gene ID" value="AT2G05160"/>
</dbReference>
<dbReference type="KEGG" id="ath:AT2G05160"/>
<dbReference type="Araport" id="AT2G05160"/>
<dbReference type="TAIR" id="AT2G05160"/>
<dbReference type="eggNOG" id="ENOG502QS3A">
    <property type="taxonomic scope" value="Eukaryota"/>
</dbReference>
<dbReference type="HOGENOM" id="CLU_028778_2_0_1"/>
<dbReference type="InParanoid" id="Q9SJ41"/>
<dbReference type="OMA" id="DRRTHCE"/>
<dbReference type="PhylomeDB" id="Q9SJ41"/>
<dbReference type="CD-CODE" id="24475C75">
    <property type="entry name" value="Stress granule"/>
</dbReference>
<dbReference type="PRO" id="PR:Q9SJ41"/>
<dbReference type="Proteomes" id="UP000006548">
    <property type="component" value="Chromosome 2"/>
</dbReference>
<dbReference type="ExpressionAtlas" id="Q9SJ41">
    <property type="expression patterns" value="baseline and differential"/>
</dbReference>
<dbReference type="GO" id="GO:0003677">
    <property type="term" value="F:DNA binding"/>
    <property type="evidence" value="ECO:0007669"/>
    <property type="project" value="UniProtKB-KW"/>
</dbReference>
<dbReference type="GO" id="GO:0004518">
    <property type="term" value="F:nuclease activity"/>
    <property type="evidence" value="ECO:0007669"/>
    <property type="project" value="UniProtKB-KW"/>
</dbReference>
<dbReference type="GO" id="GO:0003723">
    <property type="term" value="F:RNA binding"/>
    <property type="evidence" value="ECO:0007669"/>
    <property type="project" value="UniProtKB-KW"/>
</dbReference>
<dbReference type="GO" id="GO:0008270">
    <property type="term" value="F:zinc ion binding"/>
    <property type="evidence" value="ECO:0007669"/>
    <property type="project" value="UniProtKB-KW"/>
</dbReference>
<dbReference type="CDD" id="cd12458">
    <property type="entry name" value="RRM_AtC3H46_like"/>
    <property type="match status" value="1"/>
</dbReference>
<dbReference type="FunFam" id="3.30.70.330:FF:000678">
    <property type="entry name" value="zinc finger CCCH domain-containing protein 53-like isoform X2"/>
    <property type="match status" value="1"/>
</dbReference>
<dbReference type="Gene3D" id="3.30.70.330">
    <property type="match status" value="1"/>
</dbReference>
<dbReference type="Gene3D" id="4.10.1000.10">
    <property type="entry name" value="Zinc finger, CCCH-type"/>
    <property type="match status" value="1"/>
</dbReference>
<dbReference type="InterPro" id="IPR056276">
    <property type="entry name" value="AtC3H46-like_PABC-like"/>
</dbReference>
<dbReference type="InterPro" id="IPR034365">
    <property type="entry name" value="AtC3H46-like_RRM"/>
</dbReference>
<dbReference type="InterPro" id="IPR012677">
    <property type="entry name" value="Nucleotide-bd_a/b_plait_sf"/>
</dbReference>
<dbReference type="InterPro" id="IPR025605">
    <property type="entry name" value="OST-HTH/LOTUS_dom"/>
</dbReference>
<dbReference type="InterPro" id="IPR035979">
    <property type="entry name" value="RBD_domain_sf"/>
</dbReference>
<dbReference type="InterPro" id="IPR000504">
    <property type="entry name" value="RRM_dom"/>
</dbReference>
<dbReference type="InterPro" id="IPR000571">
    <property type="entry name" value="Znf_CCCH"/>
</dbReference>
<dbReference type="InterPro" id="IPR036855">
    <property type="entry name" value="Znf_CCCH_sf"/>
</dbReference>
<dbReference type="PANTHER" id="PTHR24009">
    <property type="entry name" value="RNA-BINDING (RRM/RBD/RNP MOTIFS)"/>
    <property type="match status" value="1"/>
</dbReference>
<dbReference type="PANTHER" id="PTHR24009:SF0">
    <property type="entry name" value="ZINC FINGER CCCH DOMAIN-CONTAINING PROTEIN 18"/>
    <property type="match status" value="1"/>
</dbReference>
<dbReference type="Pfam" id="PF23182">
    <property type="entry name" value="PABC_AtC3H46"/>
    <property type="match status" value="1"/>
</dbReference>
<dbReference type="Pfam" id="PF00076">
    <property type="entry name" value="RRM_1"/>
    <property type="match status" value="1"/>
</dbReference>
<dbReference type="SMART" id="SM00360">
    <property type="entry name" value="RRM"/>
    <property type="match status" value="1"/>
</dbReference>
<dbReference type="SUPFAM" id="SSF90229">
    <property type="entry name" value="CCCH zinc finger"/>
    <property type="match status" value="1"/>
</dbReference>
<dbReference type="SUPFAM" id="SSF54928">
    <property type="entry name" value="RNA-binding domain, RBD"/>
    <property type="match status" value="1"/>
</dbReference>
<dbReference type="PROSITE" id="PS51644">
    <property type="entry name" value="HTH_OST"/>
    <property type="match status" value="1"/>
</dbReference>
<dbReference type="PROSITE" id="PS50102">
    <property type="entry name" value="RRM"/>
    <property type="match status" value="1"/>
</dbReference>
<dbReference type="PROSITE" id="PS50103">
    <property type="entry name" value="ZF_C3H1"/>
    <property type="match status" value="1"/>
</dbReference>
<gene>
    <name type="ordered locus">At2g05160</name>
    <name type="ORF">F5G3.6</name>
</gene>
<organism>
    <name type="scientific">Arabidopsis thaliana</name>
    <name type="common">Mouse-ear cress</name>
    <dbReference type="NCBI Taxonomy" id="3702"/>
    <lineage>
        <taxon>Eukaryota</taxon>
        <taxon>Viridiplantae</taxon>
        <taxon>Streptophyta</taxon>
        <taxon>Embryophyta</taxon>
        <taxon>Tracheophyta</taxon>
        <taxon>Spermatophyta</taxon>
        <taxon>Magnoliopsida</taxon>
        <taxon>eudicotyledons</taxon>
        <taxon>Gunneridae</taxon>
        <taxon>Pentapetalae</taxon>
        <taxon>rosids</taxon>
        <taxon>malvids</taxon>
        <taxon>Brassicales</taxon>
        <taxon>Brassicaceae</taxon>
        <taxon>Camelineae</taxon>
        <taxon>Arabidopsis</taxon>
    </lineage>
</organism>
<feature type="chain" id="PRO_0000371977" description="Zinc finger CCCH domain-containing protein 18">
    <location>
        <begin position="1"/>
        <end position="536"/>
    </location>
</feature>
<feature type="domain" description="HTH OST-type" evidence="3">
    <location>
        <begin position="211"/>
        <end position="294"/>
    </location>
</feature>
<feature type="domain" description="RRM" evidence="1">
    <location>
        <begin position="317"/>
        <end position="392"/>
    </location>
</feature>
<feature type="zinc finger region" description="C3H1-type" evidence="2">
    <location>
        <begin position="156"/>
        <end position="183"/>
    </location>
</feature>
<feature type="sequence conflict" description="In Ref. 3; AY429380." evidence="5" ref="3">
    <original>C</original>
    <variation>W</variation>
    <location>
        <position position="351"/>
    </location>
</feature>